<proteinExistence type="inferred from homology"/>
<comment type="subcellular location">
    <subcellularLocation>
        <location evidence="1">Secreted</location>
    </subcellularLocation>
</comment>
<comment type="similarity">
    <text evidence="3">Belongs to the DEFL family.</text>
</comment>
<gene>
    <name type="primary">SCRL7</name>
    <name type="ordered locus">At1g60989</name>
    <name type="ORF">T7P1</name>
</gene>
<organism evidence="3">
    <name type="scientific">Arabidopsis thaliana</name>
    <name type="common">Mouse-ear cress</name>
    <dbReference type="NCBI Taxonomy" id="3702"/>
    <lineage>
        <taxon>Eukaryota</taxon>
        <taxon>Viridiplantae</taxon>
        <taxon>Streptophyta</taxon>
        <taxon>Embryophyta</taxon>
        <taxon>Tracheophyta</taxon>
        <taxon>Spermatophyta</taxon>
        <taxon>Magnoliopsida</taxon>
        <taxon>eudicotyledons</taxon>
        <taxon>Gunneridae</taxon>
        <taxon>Pentapetalae</taxon>
        <taxon>rosids</taxon>
        <taxon>malvids</taxon>
        <taxon>Brassicales</taxon>
        <taxon>Brassicaceae</taxon>
        <taxon>Camelineae</taxon>
        <taxon>Arabidopsis</taxon>
    </lineage>
</organism>
<name>DF249_ARATH</name>
<evidence type="ECO:0000250" key="1"/>
<evidence type="ECO:0000255" key="2"/>
<evidence type="ECO:0000305" key="3"/>
<accession>P82626</accession>
<accession>A7RED3</accession>
<dbReference type="EMBL" id="AC018908">
    <property type="status" value="NOT_ANNOTATED_CDS"/>
    <property type="molecule type" value="Genomic_DNA"/>
</dbReference>
<dbReference type="EMBL" id="CP002684">
    <property type="protein sequence ID" value="AEE33763.1"/>
    <property type="molecule type" value="Genomic_DNA"/>
</dbReference>
<dbReference type="EMBL" id="DQ912182">
    <property type="protein sequence ID" value="ABI34005.1"/>
    <property type="molecule type" value="mRNA"/>
</dbReference>
<dbReference type="EMBL" id="EF182799">
    <property type="status" value="NOT_ANNOTATED_CDS"/>
    <property type="molecule type" value="mRNA"/>
</dbReference>
<dbReference type="EMBL" id="DQ108859">
    <property type="status" value="NOT_ANNOTATED_CDS"/>
    <property type="molecule type" value="mRNA"/>
</dbReference>
<dbReference type="RefSeq" id="NP_001031214.1">
    <property type="nucleotide sequence ID" value="NM_001036137.3"/>
</dbReference>
<dbReference type="STRING" id="3702.P82626"/>
<dbReference type="PaxDb" id="3702-AT1G60989.1"/>
<dbReference type="ProteomicsDB" id="224157"/>
<dbReference type="EnsemblPlants" id="AT1G60989.1">
    <property type="protein sequence ID" value="AT1G60989.1"/>
    <property type="gene ID" value="AT1G60989"/>
</dbReference>
<dbReference type="GeneID" id="3767593"/>
<dbReference type="Gramene" id="AT1G60989.1">
    <property type="protein sequence ID" value="AT1G60989.1"/>
    <property type="gene ID" value="AT1G60989"/>
</dbReference>
<dbReference type="KEGG" id="ath:AT1G60989"/>
<dbReference type="Araport" id="AT1G60989"/>
<dbReference type="TAIR" id="AT1G60989">
    <property type="gene designation" value="SCRL7"/>
</dbReference>
<dbReference type="HOGENOM" id="CLU_174283_0_0_1"/>
<dbReference type="InParanoid" id="P82626"/>
<dbReference type="OMA" id="PIYCDCT"/>
<dbReference type="OrthoDB" id="1021808at2759"/>
<dbReference type="PhylomeDB" id="P82626"/>
<dbReference type="PRO" id="PR:P82626"/>
<dbReference type="Proteomes" id="UP000006548">
    <property type="component" value="Chromosome 1"/>
</dbReference>
<dbReference type="ExpressionAtlas" id="P82626">
    <property type="expression patterns" value="baseline and differential"/>
</dbReference>
<dbReference type="GO" id="GO:0005576">
    <property type="term" value="C:extracellular region"/>
    <property type="evidence" value="ECO:0007669"/>
    <property type="project" value="UniProtKB-SubCell"/>
</dbReference>
<dbReference type="GO" id="GO:0050832">
    <property type="term" value="P:defense response to fungus"/>
    <property type="evidence" value="ECO:0007669"/>
    <property type="project" value="UniProtKB-KW"/>
</dbReference>
<dbReference type="GO" id="GO:0031640">
    <property type="term" value="P:killing of cells of another organism"/>
    <property type="evidence" value="ECO:0007669"/>
    <property type="project" value="UniProtKB-KW"/>
</dbReference>
<dbReference type="GO" id="GO:0007165">
    <property type="term" value="P:signal transduction"/>
    <property type="evidence" value="ECO:0007669"/>
    <property type="project" value="InterPro"/>
</dbReference>
<dbReference type="InterPro" id="IPR010682">
    <property type="entry name" value="SCRL"/>
</dbReference>
<dbReference type="PANTHER" id="PTHR34450">
    <property type="entry name" value="DEFENSIN-LIKE PROTEIN 245-RELATED"/>
    <property type="match status" value="1"/>
</dbReference>
<dbReference type="PANTHER" id="PTHR34450:SF10">
    <property type="entry name" value="DEFENSIN-LIKE PROTEIN 245-RELATED"/>
    <property type="match status" value="1"/>
</dbReference>
<dbReference type="Pfam" id="PF06876">
    <property type="entry name" value="SCRL"/>
    <property type="match status" value="1"/>
</dbReference>
<sequence length="92" mass="10308">MKLAAIFLASSVLLSLLPIHLSQGEAAGERRQWCPSKQQVFRGSCSDDGGQKCLNDLLWTWNPSVRLSPIYCDCTPKRHNKRLCDCPSMICL</sequence>
<feature type="signal peptide" evidence="2">
    <location>
        <begin position="1"/>
        <end position="24"/>
    </location>
</feature>
<feature type="chain" id="PRO_0000031933" description="Defensin-like protein 249">
    <location>
        <begin position="25"/>
        <end position="92"/>
    </location>
</feature>
<feature type="disulfide bond" evidence="1">
    <location>
        <begin position="34"/>
        <end position="91"/>
    </location>
</feature>
<feature type="disulfide bond" evidence="1">
    <location>
        <begin position="45"/>
        <end position="74"/>
    </location>
</feature>
<feature type="disulfide bond" evidence="1">
    <location>
        <begin position="53"/>
        <end position="84"/>
    </location>
</feature>
<feature type="disulfide bond" evidence="1">
    <location>
        <begin position="72"/>
        <end position="86"/>
    </location>
</feature>
<reference evidence="3" key="1">
    <citation type="journal article" date="2000" name="Nature">
        <title>Sequence and analysis of chromosome 1 of the plant Arabidopsis thaliana.</title>
        <authorList>
            <person name="Theologis A."/>
            <person name="Ecker J.R."/>
            <person name="Palm C.J."/>
            <person name="Federspiel N.A."/>
            <person name="Kaul S."/>
            <person name="White O."/>
            <person name="Alonso J."/>
            <person name="Altafi H."/>
            <person name="Araujo R."/>
            <person name="Bowman C.L."/>
            <person name="Brooks S.Y."/>
            <person name="Buehler E."/>
            <person name="Chan A."/>
            <person name="Chao Q."/>
            <person name="Chen H."/>
            <person name="Cheuk R.F."/>
            <person name="Chin C.W."/>
            <person name="Chung M.K."/>
            <person name="Conn L."/>
            <person name="Conway A.B."/>
            <person name="Conway A.R."/>
            <person name="Creasy T.H."/>
            <person name="Dewar K."/>
            <person name="Dunn P."/>
            <person name="Etgu P."/>
            <person name="Feldblyum T.V."/>
            <person name="Feng J.-D."/>
            <person name="Fong B."/>
            <person name="Fujii C.Y."/>
            <person name="Gill J.E."/>
            <person name="Goldsmith A.D."/>
            <person name="Haas B."/>
            <person name="Hansen N.F."/>
            <person name="Hughes B."/>
            <person name="Huizar L."/>
            <person name="Hunter J.L."/>
            <person name="Jenkins J."/>
            <person name="Johnson-Hopson C."/>
            <person name="Khan S."/>
            <person name="Khaykin E."/>
            <person name="Kim C.J."/>
            <person name="Koo H.L."/>
            <person name="Kremenetskaia I."/>
            <person name="Kurtz D.B."/>
            <person name="Kwan A."/>
            <person name="Lam B."/>
            <person name="Langin-Hooper S."/>
            <person name="Lee A."/>
            <person name="Lee J.M."/>
            <person name="Lenz C.A."/>
            <person name="Li J.H."/>
            <person name="Li Y.-P."/>
            <person name="Lin X."/>
            <person name="Liu S.X."/>
            <person name="Liu Z.A."/>
            <person name="Luros J.S."/>
            <person name="Maiti R."/>
            <person name="Marziali A."/>
            <person name="Militscher J."/>
            <person name="Miranda M."/>
            <person name="Nguyen M."/>
            <person name="Nierman W.C."/>
            <person name="Osborne B.I."/>
            <person name="Pai G."/>
            <person name="Peterson J."/>
            <person name="Pham P.K."/>
            <person name="Rizzo M."/>
            <person name="Rooney T."/>
            <person name="Rowley D."/>
            <person name="Sakano H."/>
            <person name="Salzberg S.L."/>
            <person name="Schwartz J.R."/>
            <person name="Shinn P."/>
            <person name="Southwick A.M."/>
            <person name="Sun H."/>
            <person name="Tallon L.J."/>
            <person name="Tambunga G."/>
            <person name="Toriumi M.J."/>
            <person name="Town C.D."/>
            <person name="Utterback T."/>
            <person name="Van Aken S."/>
            <person name="Vaysberg M."/>
            <person name="Vysotskaia V.S."/>
            <person name="Walker M."/>
            <person name="Wu D."/>
            <person name="Yu G."/>
            <person name="Fraser C.M."/>
            <person name="Venter J.C."/>
            <person name="Davis R.W."/>
        </authorList>
    </citation>
    <scope>NUCLEOTIDE SEQUENCE [LARGE SCALE GENOMIC DNA]</scope>
    <source>
        <strain>cv. Columbia</strain>
    </source>
</reference>
<reference key="2">
    <citation type="journal article" date="2017" name="Plant J.">
        <title>Araport11: a complete reannotation of the Arabidopsis thaliana reference genome.</title>
        <authorList>
            <person name="Cheng C.Y."/>
            <person name="Krishnakumar V."/>
            <person name="Chan A.P."/>
            <person name="Thibaud-Nissen F."/>
            <person name="Schobel S."/>
            <person name="Town C.D."/>
        </authorList>
    </citation>
    <scope>GENOME REANNOTATION</scope>
    <source>
        <strain>cv. Columbia</strain>
    </source>
</reference>
<reference key="3">
    <citation type="journal article" date="2006" name="Plant Biotechnol. J.">
        <title>Simultaneous high-throughput recombinational cloning of open reading frames in closed and open configurations.</title>
        <authorList>
            <person name="Underwood B.A."/>
            <person name="Vanderhaeghen R."/>
            <person name="Whitford R."/>
            <person name="Town C.D."/>
            <person name="Hilson P."/>
        </authorList>
    </citation>
    <scope>NUCLEOTIDE SEQUENCE [LARGE SCALE MRNA]</scope>
    <source>
        <strain>cv. Columbia</strain>
    </source>
</reference>
<reference key="4">
    <citation type="journal article" date="2007" name="Plant J.">
        <title>Small cysteine-rich peptides resembling antimicrobial peptides have been under-predicted in plants.</title>
        <authorList>
            <person name="Silverstein K.A.T."/>
            <person name="Moskal W.A. Jr."/>
            <person name="Wu H.C."/>
            <person name="Underwood B.A."/>
            <person name="Graham M.A."/>
            <person name="Town C.D."/>
            <person name="VandenBosch K.A."/>
        </authorList>
    </citation>
    <scope>NUCLEOTIDE SEQUENCE [LARGE SCALE MRNA]</scope>
    <source>
        <strain>cv. Columbia</strain>
    </source>
</reference>
<reference key="5">
    <citation type="submission" date="2005-06" db="EMBL/GenBank/DDBJ databases">
        <title>Full-length cDNA from Arabidopsis thaliana.</title>
        <authorList>
            <person name="Alexandrov N.N."/>
            <person name="Brover V.V."/>
            <person name="Troukhan M.E."/>
            <person name="Lu Y.-P."/>
            <person name="Flavell R.B."/>
            <person name="Feldmann K.A."/>
        </authorList>
    </citation>
    <scope>NUCLEOTIDE SEQUENCE [LARGE SCALE MRNA]</scope>
</reference>
<reference evidence="3" key="6">
    <citation type="journal article" date="2001" name="Plant Mol. Biol.">
        <title>Two large Arabidopsis thaliana gene families are homologous to the Brassica gene superfamily that encodes pollen coat proteins and the male component of the self-incompatibility response.</title>
        <authorList>
            <person name="Vanoosthuyse V."/>
            <person name="Miege C."/>
            <person name="Dumas C."/>
            <person name="Cock J.M."/>
        </authorList>
    </citation>
    <scope>IDENTIFICATION</scope>
</reference>
<reference key="7">
    <citation type="journal article" date="2005" name="Plant Physiol.">
        <title>Genome organization of more than 300 defensin-like genes in Arabidopsis.</title>
        <authorList>
            <person name="Silverstein K.A.T."/>
            <person name="Graham M.A."/>
            <person name="Paape T.D."/>
            <person name="VandenBosch K.A."/>
        </authorList>
    </citation>
    <scope>GENE FAMILY</scope>
</reference>
<keyword id="KW-0929">Antimicrobial</keyword>
<keyword id="KW-1015">Disulfide bond</keyword>
<keyword id="KW-0295">Fungicide</keyword>
<keyword id="KW-0611">Plant defense</keyword>
<keyword id="KW-1185">Reference proteome</keyword>
<keyword id="KW-0964">Secreted</keyword>
<keyword id="KW-0732">Signal</keyword>
<protein>
    <recommendedName>
        <fullName>Defensin-like protein 249</fullName>
    </recommendedName>
    <alternativeName>
        <fullName>S locus cysteine-rich-like protein 7</fullName>
        <shortName>Protein SCRL7</shortName>
        <shortName>SCR-like protein 7</shortName>
    </alternativeName>
</protein>